<keyword id="KW-0325">Glycoprotein</keyword>
<keyword id="KW-0964">Secreted</keyword>
<keyword id="KW-0732">Signal</keyword>
<keyword id="KW-0758">Storage protein</keyword>
<proteinExistence type="evidence at transcript level"/>
<feature type="signal peptide" evidence="2">
    <location>
        <begin position="1"/>
        <end position="17"/>
    </location>
</feature>
<feature type="chain" id="PRO_0000013338" description="Hexamerin">
    <location>
        <begin position="18"/>
        <end position="733"/>
    </location>
</feature>
<feature type="glycosylation site" description="N-linked (GlcNAc...) asparagine" evidence="2">
    <location>
        <position position="199"/>
    </location>
</feature>
<feature type="glycosylation site" description="N-linked (GlcNAc...) asparagine" evidence="2">
    <location>
        <position position="234"/>
    </location>
</feature>
<feature type="glycosylation site" description="N-linked (GlcNAc...) asparagine" evidence="2">
    <location>
        <position position="431"/>
    </location>
</feature>
<organism>
    <name type="scientific">Blaberus discoidalis</name>
    <name type="common">Tropical cockroach</name>
    <dbReference type="NCBI Taxonomy" id="6981"/>
    <lineage>
        <taxon>Eukaryota</taxon>
        <taxon>Metazoa</taxon>
        <taxon>Ecdysozoa</taxon>
        <taxon>Arthropoda</taxon>
        <taxon>Hexapoda</taxon>
        <taxon>Insecta</taxon>
        <taxon>Pterygota</taxon>
        <taxon>Neoptera</taxon>
        <taxon>Polyneoptera</taxon>
        <taxon>Dictyoptera</taxon>
        <taxon>Blattodea</taxon>
        <taxon>Blaberoidea</taxon>
        <taxon>Blaberidae</taxon>
        <taxon>Blaberinae</taxon>
        <taxon>Blaberus</taxon>
    </lineage>
</organism>
<name>HEXA_BLADI</name>
<sequence length="733" mass="87813">MKTALVLILATATLAVAYPSSTQDYRVVADKTFLTRQRDFLRLLVRIEQPNYYADQYEVGNAYDIEANINNYKYPHVVKNFLSAYKRGMLPRGVPYSPYYTTQSYETKLLFDLFYYANDYDTFYKTVCWARDRINEGQFLYAFSTAVFQREDLSDYILPPPYEIYPYLFVDSEVIQKAYETRMSDVHLTAPKTYIFPVNYTVANPEQELYYWYEDVGLNTYYAYYYFNYPTFFNETEYGVHFDRRGELFYYTRQQLYARQFLERHSHDLGEVEPVHYDRPFQTEYYPRLRYSNGQEVPPRPYEYSRRSLYYSNGNSYYYGNYYGGNNNYYTGNYYTGNYHPSYYYGYSTEHDYYYPEDLQIYDRRVLDSIDYGYVFSYPDHKYPLYEDYTKGIDYLGDVIEGNGDTVNRRYYGSIYHFYRQLAGKNVDPYNDSGFAPSALQNIYTALRDPANFHILKHINSYFQRYKGYLPRYTYDELVFPGVKIENVDVGKLVTYFDYFDVDIDNVVNVKVAEDGKYVDYRARQTRLNHKPFTYNIEVNSEQATDVYVRVFLGPKYDYLGREYDLNDRRHYFVELDRFPYKVQAGKTTITRNSRESSVVSHDYPSFRTLLRKVFDAYEGKEQFYYDKSERYCGYPERLLLPKGKTGGQTYTFYVMVTPYVKQDDHDFEPYNYKSFSYCGVGANHKFPDDKPFGYPFDRVLYSQEFVTPNMYFKDVVIYHKKYEEINAATVQQ</sequence>
<comment type="function">
    <text evidence="1">Larval storage protein (LSP) which may serve as a store of amino acids for synthesis of adult proteins.</text>
</comment>
<comment type="subunit">
    <text evidence="3">Homohexamer.</text>
</comment>
<comment type="subcellular location">
    <subcellularLocation>
        <location evidence="1">Secreted</location>
        <location evidence="1">Extracellular space</location>
    </subcellularLocation>
</comment>
<comment type="similarity">
    <text evidence="3">Belongs to the hemocyanin family.</text>
</comment>
<evidence type="ECO:0000250" key="1"/>
<evidence type="ECO:0000255" key="2"/>
<evidence type="ECO:0000305" key="3"/>
<protein>
    <recommendedName>
        <fullName>Hexamerin</fullName>
    </recommendedName>
</protein>
<accession>Q17127</accession>
<reference key="1">
    <citation type="submission" date="1995-08" db="EMBL/GenBank/DDBJ databases">
        <authorList>
            <person name="Jamroz R.C."/>
            <person name="Beintema J.J."/>
            <person name="Stam W.T."/>
            <person name="Bradfield J.Y."/>
        </authorList>
    </citation>
    <scope>NUCLEOTIDE SEQUENCE [MRNA]</scope>
    <source>
        <tissue>Fat body</tissue>
    </source>
</reference>
<dbReference type="EMBL" id="U31328">
    <property type="protein sequence ID" value="AAA74579.1"/>
    <property type="molecule type" value="mRNA"/>
</dbReference>
<dbReference type="SMR" id="Q17127"/>
<dbReference type="GO" id="GO:0005576">
    <property type="term" value="C:extracellular region"/>
    <property type="evidence" value="ECO:0007669"/>
    <property type="project" value="UniProtKB-SubCell"/>
</dbReference>
<dbReference type="GO" id="GO:0045735">
    <property type="term" value="F:nutrient reservoir activity"/>
    <property type="evidence" value="ECO:0007669"/>
    <property type="project" value="UniProtKB-KW"/>
</dbReference>
<dbReference type="Gene3D" id="1.10.1280.10">
    <property type="entry name" value="Di-copper center containing domain from catechol oxidase"/>
    <property type="match status" value="1"/>
</dbReference>
<dbReference type="Gene3D" id="2.60.40.1520">
    <property type="entry name" value="Hemocyanin, C-terminal domain"/>
    <property type="match status" value="1"/>
</dbReference>
<dbReference type="Gene3D" id="1.20.1370.10">
    <property type="entry name" value="Hemocyanin, N-terminal domain"/>
    <property type="match status" value="1"/>
</dbReference>
<dbReference type="InterPro" id="IPR008922">
    <property type="entry name" value="Di-copper_centre_dom_sf"/>
</dbReference>
<dbReference type="InterPro" id="IPR013788">
    <property type="entry name" value="Hemocyanin/hexamerin"/>
</dbReference>
<dbReference type="InterPro" id="IPR000896">
    <property type="entry name" value="Hemocyanin/hexamerin_mid_dom"/>
</dbReference>
<dbReference type="InterPro" id="IPR005203">
    <property type="entry name" value="Hemocyanin_C"/>
</dbReference>
<dbReference type="InterPro" id="IPR037020">
    <property type="entry name" value="Hemocyanin_C_sf"/>
</dbReference>
<dbReference type="InterPro" id="IPR005204">
    <property type="entry name" value="Hemocyanin_N"/>
</dbReference>
<dbReference type="InterPro" id="IPR036697">
    <property type="entry name" value="Hemocyanin_N_sf"/>
</dbReference>
<dbReference type="InterPro" id="IPR014756">
    <property type="entry name" value="Ig_E-set"/>
</dbReference>
<dbReference type="PANTHER" id="PTHR11511:SF5">
    <property type="entry name" value="FAT-BODY PROTEIN 1-RELATED"/>
    <property type="match status" value="1"/>
</dbReference>
<dbReference type="PANTHER" id="PTHR11511">
    <property type="entry name" value="LARVAL STORAGE PROTEIN/PHENOLOXIDASE"/>
    <property type="match status" value="1"/>
</dbReference>
<dbReference type="Pfam" id="PF03723">
    <property type="entry name" value="Hemocyanin_C"/>
    <property type="match status" value="1"/>
</dbReference>
<dbReference type="Pfam" id="PF00372">
    <property type="entry name" value="Hemocyanin_M"/>
    <property type="match status" value="1"/>
</dbReference>
<dbReference type="Pfam" id="PF03722">
    <property type="entry name" value="Hemocyanin_N"/>
    <property type="match status" value="1"/>
</dbReference>
<dbReference type="PRINTS" id="PR00187">
    <property type="entry name" value="HAEMOCYANIN"/>
</dbReference>
<dbReference type="SUPFAM" id="SSF48056">
    <property type="entry name" value="Di-copper centre-containing domain"/>
    <property type="match status" value="1"/>
</dbReference>
<dbReference type="SUPFAM" id="SSF81296">
    <property type="entry name" value="E set domains"/>
    <property type="match status" value="1"/>
</dbReference>
<dbReference type="SUPFAM" id="SSF48050">
    <property type="entry name" value="Hemocyanin, N-terminal domain"/>
    <property type="match status" value="1"/>
</dbReference>